<keyword id="KW-0050">Antiport</keyword>
<keyword id="KW-0997">Cell inner membrane</keyword>
<keyword id="KW-1003">Cell membrane</keyword>
<keyword id="KW-0472">Membrane</keyword>
<keyword id="KW-0812">Transmembrane</keyword>
<keyword id="KW-1133">Transmembrane helix</keyword>
<keyword id="KW-0813">Transport</keyword>
<evidence type="ECO:0000250" key="1">
    <source>
        <dbReference type="UniProtKB" id="P39414"/>
    </source>
</evidence>
<evidence type="ECO:0000255" key="2"/>
<evidence type="ECO:0000305" key="3"/>
<gene>
    <name type="primary">ttdT</name>
    <name type="ordered locus">SBO_2921</name>
</gene>
<name>TTDT_SHIBS</name>
<comment type="function">
    <text evidence="1">Catalyzes the uptake of tartrate in exchange for intracellular succinate. Essential for anaerobic L-tartrate fermentation.</text>
</comment>
<comment type="catalytic activity">
    <reaction evidence="1">
        <text>(2R,3R)-tartrate(out) + succinate(in) = (2R,3R)-tartrate(in) + succinate(out)</text>
        <dbReference type="Rhea" id="RHEA:29259"/>
        <dbReference type="ChEBI" id="CHEBI:30031"/>
        <dbReference type="ChEBI" id="CHEBI:30924"/>
    </reaction>
    <physiologicalReaction direction="left-to-right" evidence="1">
        <dbReference type="Rhea" id="RHEA:29260"/>
    </physiologicalReaction>
</comment>
<comment type="subcellular location">
    <subcellularLocation>
        <location evidence="1">Cell inner membrane</location>
        <topology evidence="2">Multi-pass membrane protein</topology>
    </subcellularLocation>
</comment>
<comment type="similarity">
    <text evidence="3">Belongs to the SLC13A/DASS transporter (TC 2.A.47) family. DIT1 subfamily.</text>
</comment>
<proteinExistence type="inferred from homology"/>
<protein>
    <recommendedName>
        <fullName evidence="1">L-tartrate/succinate antiporter</fullName>
    </recommendedName>
    <alternativeName>
        <fullName>Tartrate carrier</fullName>
    </alternativeName>
    <alternativeName>
        <fullName>Tartrate transporter</fullName>
    </alternativeName>
</protein>
<accession>Q31WX1</accession>
<organism>
    <name type="scientific">Shigella boydii serotype 4 (strain Sb227)</name>
    <dbReference type="NCBI Taxonomy" id="300268"/>
    <lineage>
        <taxon>Bacteria</taxon>
        <taxon>Pseudomonadati</taxon>
        <taxon>Pseudomonadota</taxon>
        <taxon>Gammaproteobacteria</taxon>
        <taxon>Enterobacterales</taxon>
        <taxon>Enterobacteriaceae</taxon>
        <taxon>Shigella</taxon>
    </lineage>
</organism>
<reference key="1">
    <citation type="journal article" date="2005" name="Nucleic Acids Res.">
        <title>Genome dynamics and diversity of Shigella species, the etiologic agents of bacillary dysentery.</title>
        <authorList>
            <person name="Yang F."/>
            <person name="Yang J."/>
            <person name="Zhang X."/>
            <person name="Chen L."/>
            <person name="Jiang Y."/>
            <person name="Yan Y."/>
            <person name="Tang X."/>
            <person name="Wang J."/>
            <person name="Xiong Z."/>
            <person name="Dong J."/>
            <person name="Xue Y."/>
            <person name="Zhu Y."/>
            <person name="Xu X."/>
            <person name="Sun L."/>
            <person name="Chen S."/>
            <person name="Nie H."/>
            <person name="Peng J."/>
            <person name="Xu J."/>
            <person name="Wang Y."/>
            <person name="Yuan Z."/>
            <person name="Wen Y."/>
            <person name="Yao Z."/>
            <person name="Shen Y."/>
            <person name="Qiang B."/>
            <person name="Hou Y."/>
            <person name="Yu J."/>
            <person name="Jin Q."/>
        </authorList>
    </citation>
    <scope>NUCLEOTIDE SEQUENCE [LARGE SCALE GENOMIC DNA]</scope>
    <source>
        <strain>Sb227</strain>
    </source>
</reference>
<dbReference type="EMBL" id="CP000036">
    <property type="protein sequence ID" value="ABB67437.1"/>
    <property type="molecule type" value="Genomic_DNA"/>
</dbReference>
<dbReference type="RefSeq" id="WP_000804906.1">
    <property type="nucleotide sequence ID" value="NC_007613.1"/>
</dbReference>
<dbReference type="SMR" id="Q31WX1"/>
<dbReference type="KEGG" id="sbo:SBO_2921"/>
<dbReference type="HOGENOM" id="CLU_005170_7_3_6"/>
<dbReference type="Proteomes" id="UP000007067">
    <property type="component" value="Chromosome"/>
</dbReference>
<dbReference type="GO" id="GO:0005886">
    <property type="term" value="C:plasma membrane"/>
    <property type="evidence" value="ECO:0007669"/>
    <property type="project" value="UniProtKB-SubCell"/>
</dbReference>
<dbReference type="GO" id="GO:0015297">
    <property type="term" value="F:antiporter activity"/>
    <property type="evidence" value="ECO:0007669"/>
    <property type="project" value="UniProtKB-KW"/>
</dbReference>
<dbReference type="InterPro" id="IPR030676">
    <property type="entry name" value="CitT-rel"/>
</dbReference>
<dbReference type="InterPro" id="IPR001898">
    <property type="entry name" value="SLC13A/DASS"/>
</dbReference>
<dbReference type="NCBIfam" id="TIGR00785">
    <property type="entry name" value="dass"/>
    <property type="match status" value="1"/>
</dbReference>
<dbReference type="PANTHER" id="PTHR42826">
    <property type="entry name" value="DICARBOXYLATE TRANSPORTER 2.1, CHLOROPLASTIC"/>
    <property type="match status" value="1"/>
</dbReference>
<dbReference type="Pfam" id="PF00939">
    <property type="entry name" value="Na_sulph_symp"/>
    <property type="match status" value="1"/>
</dbReference>
<dbReference type="PIRSF" id="PIRSF002457">
    <property type="entry name" value="DASS"/>
    <property type="match status" value="1"/>
</dbReference>
<sequence length="487" mass="52940">MKPSTEWWRYLAPLAVIAIIALIPVPAGLESHTWLYFAVFTGVIVGLILEPVPGAVVAMVGISIIAILSPWLLFSPEQLAQPGFKFTAKSLSWAVFGFSNSVIWLIFAAFMFGTGYEKTGLGRRIALILVKKMGHRTLFLGYAVMFSELILAPVTPSNSARGAGIIYPIIRNLPPLYQSQPNDSSSRSIGSYIMWMGIVADCVTSAIFLTAMAPNLLLIGLMKSASHATLSWGDWFLGMLPLSILLVLLVPWLAYVLYPPVLKSGDQVPRWAETELQAMGPLCSREKRMLGLMVGALVLWIFGGDYIDAAMVGYSVVALMLLLRIISWDDIVSNKAAWNVFFWLASLITLATGLNNTGFISWFGKLLAGSLSGYSPTMVMVALIVVFYLLRYFFASATAYTSALAPMMIAAALAMPEIPLPVFCLMVGAAIGLGSILTPYATGPSPIYYGSGYLPTADYWRLGAIFGLIFLVLLVITGLLWMPVVLL</sequence>
<feature type="chain" id="PRO_0000262715" description="L-tartrate/succinate antiporter">
    <location>
        <begin position="1"/>
        <end position="487"/>
    </location>
</feature>
<feature type="transmembrane region" description="Helical" evidence="2">
    <location>
        <begin position="10"/>
        <end position="30"/>
    </location>
</feature>
<feature type="transmembrane region" description="Helical" evidence="2">
    <location>
        <begin position="33"/>
        <end position="53"/>
    </location>
</feature>
<feature type="transmembrane region" description="Helical" evidence="2">
    <location>
        <begin position="54"/>
        <end position="74"/>
    </location>
</feature>
<feature type="transmembrane region" description="Helical" evidence="2">
    <location>
        <begin position="93"/>
        <end position="113"/>
    </location>
</feature>
<feature type="transmembrane region" description="Helical" evidence="2">
    <location>
        <begin position="137"/>
        <end position="157"/>
    </location>
</feature>
<feature type="transmembrane region" description="Helical" evidence="2">
    <location>
        <begin position="189"/>
        <end position="209"/>
    </location>
</feature>
<feature type="transmembrane region" description="Helical" evidence="2">
    <location>
        <begin position="236"/>
        <end position="256"/>
    </location>
</feature>
<feature type="transmembrane region" description="Helical" evidence="2">
    <location>
        <begin position="292"/>
        <end position="312"/>
    </location>
</feature>
<feature type="transmembrane region" description="Helical" evidence="2">
    <location>
        <begin position="313"/>
        <end position="333"/>
    </location>
</feature>
<feature type="transmembrane region" description="Helical" evidence="2">
    <location>
        <begin position="340"/>
        <end position="360"/>
    </location>
</feature>
<feature type="transmembrane region" description="Helical" evidence="2">
    <location>
        <begin position="370"/>
        <end position="390"/>
    </location>
</feature>
<feature type="transmembrane region" description="Helical" evidence="2">
    <location>
        <begin position="393"/>
        <end position="413"/>
    </location>
</feature>
<feature type="transmembrane region" description="Helical" evidence="2">
    <location>
        <begin position="418"/>
        <end position="438"/>
    </location>
</feature>
<feature type="transmembrane region" description="Helical" evidence="2">
    <location>
        <begin position="465"/>
        <end position="485"/>
    </location>
</feature>